<organism>
    <name type="scientific">Beutenbergia cavernae (strain ATCC BAA-8 / DSM 12333 / CCUG 43141 / JCM 11478 / NBRC 16432 / NCIMB 13614 / HKI 0122)</name>
    <dbReference type="NCBI Taxonomy" id="471853"/>
    <lineage>
        <taxon>Bacteria</taxon>
        <taxon>Bacillati</taxon>
        <taxon>Actinomycetota</taxon>
        <taxon>Actinomycetes</taxon>
        <taxon>Micrococcales</taxon>
        <taxon>Beutenbergiaceae</taxon>
        <taxon>Beutenbergia</taxon>
    </lineage>
</organism>
<comment type="function">
    <text evidence="1">Catalyzes the conversion of 4-hydroxy-tetrahydrodipicolinate (HTPA) to tetrahydrodipicolinate.</text>
</comment>
<comment type="catalytic activity">
    <reaction evidence="1">
        <text>(S)-2,3,4,5-tetrahydrodipicolinate + NAD(+) + H2O = (2S,4S)-4-hydroxy-2,3,4,5-tetrahydrodipicolinate + NADH + H(+)</text>
        <dbReference type="Rhea" id="RHEA:35323"/>
        <dbReference type="ChEBI" id="CHEBI:15377"/>
        <dbReference type="ChEBI" id="CHEBI:15378"/>
        <dbReference type="ChEBI" id="CHEBI:16845"/>
        <dbReference type="ChEBI" id="CHEBI:57540"/>
        <dbReference type="ChEBI" id="CHEBI:57945"/>
        <dbReference type="ChEBI" id="CHEBI:67139"/>
        <dbReference type="EC" id="1.17.1.8"/>
    </reaction>
</comment>
<comment type="catalytic activity">
    <reaction evidence="1">
        <text>(S)-2,3,4,5-tetrahydrodipicolinate + NADP(+) + H2O = (2S,4S)-4-hydroxy-2,3,4,5-tetrahydrodipicolinate + NADPH + H(+)</text>
        <dbReference type="Rhea" id="RHEA:35331"/>
        <dbReference type="ChEBI" id="CHEBI:15377"/>
        <dbReference type="ChEBI" id="CHEBI:15378"/>
        <dbReference type="ChEBI" id="CHEBI:16845"/>
        <dbReference type="ChEBI" id="CHEBI:57783"/>
        <dbReference type="ChEBI" id="CHEBI:58349"/>
        <dbReference type="ChEBI" id="CHEBI:67139"/>
        <dbReference type="EC" id="1.17.1.8"/>
    </reaction>
</comment>
<comment type="pathway">
    <text evidence="1">Amino-acid biosynthesis; L-lysine biosynthesis via DAP pathway; (S)-tetrahydrodipicolinate from L-aspartate: step 4/4.</text>
</comment>
<comment type="subcellular location">
    <subcellularLocation>
        <location evidence="1">Cytoplasm</location>
    </subcellularLocation>
</comment>
<comment type="similarity">
    <text evidence="1">Belongs to the DapB family.</text>
</comment>
<comment type="caution">
    <text evidence="2">Was originally thought to be a dihydrodipicolinate reductase (DHDPR), catalyzing the conversion of dihydrodipicolinate to tetrahydrodipicolinate. However, it was shown in E.coli that the substrate of the enzymatic reaction is not dihydrodipicolinate (DHDP) but in fact (2S,4S)-4-hydroxy-2,3,4,5-tetrahydrodipicolinic acid (HTPA), the product released by the DapA-catalyzed reaction.</text>
</comment>
<name>DAPB_BEUC1</name>
<sequence length="247" mass="25315">MTIRVAVLGAAGRMGSTTAQAVRDAEGLELVAEVDAGDDVAALAGRADVAVDFTLPDVTEANVHALLDAGIHAVVGTTGWDDDALGRVSDHVGRTAGLGVLVAPNFSLSAVLAMRFAAQAAPYFASAEVVELHHPRKVDAPSGTAVHTARGIADARGAAGSPPMPDATETALPGARGAVVDGVRVHALRLEGLVAHEEILLSNPGELMTIRTDTFDRASFMPGVLLAVREIADHPGLTVGLDAYLDL</sequence>
<keyword id="KW-0028">Amino-acid biosynthesis</keyword>
<keyword id="KW-0963">Cytoplasm</keyword>
<keyword id="KW-0220">Diaminopimelate biosynthesis</keyword>
<keyword id="KW-0457">Lysine biosynthesis</keyword>
<keyword id="KW-0520">NAD</keyword>
<keyword id="KW-0521">NADP</keyword>
<keyword id="KW-0560">Oxidoreductase</keyword>
<keyword id="KW-1185">Reference proteome</keyword>
<proteinExistence type="inferred from homology"/>
<accession>C5BWQ6</accession>
<feature type="chain" id="PRO_1000202808" description="4-hydroxy-tetrahydrodipicolinate reductase">
    <location>
        <begin position="1"/>
        <end position="247"/>
    </location>
</feature>
<feature type="active site" description="Proton donor/acceptor" evidence="1">
    <location>
        <position position="133"/>
    </location>
</feature>
<feature type="active site" description="Proton donor" evidence="1">
    <location>
        <position position="137"/>
    </location>
</feature>
<feature type="binding site" evidence="1">
    <location>
        <begin position="9"/>
        <end position="14"/>
    </location>
    <ligand>
        <name>NAD(+)</name>
        <dbReference type="ChEBI" id="CHEBI:57540"/>
    </ligand>
</feature>
<feature type="binding site" evidence="1">
    <location>
        <begin position="76"/>
        <end position="78"/>
    </location>
    <ligand>
        <name>NAD(+)</name>
        <dbReference type="ChEBI" id="CHEBI:57540"/>
    </ligand>
</feature>
<feature type="binding site" evidence="1">
    <location>
        <begin position="103"/>
        <end position="106"/>
    </location>
    <ligand>
        <name>NAD(+)</name>
        <dbReference type="ChEBI" id="CHEBI:57540"/>
    </ligand>
</feature>
<feature type="binding site" evidence="1">
    <location>
        <position position="134"/>
    </location>
    <ligand>
        <name>(S)-2,3,4,5-tetrahydrodipicolinate</name>
        <dbReference type="ChEBI" id="CHEBI:16845"/>
    </ligand>
</feature>
<feature type="binding site" evidence="1">
    <location>
        <begin position="143"/>
        <end position="144"/>
    </location>
    <ligand>
        <name>(S)-2,3,4,5-tetrahydrodipicolinate</name>
        <dbReference type="ChEBI" id="CHEBI:16845"/>
    </ligand>
</feature>
<protein>
    <recommendedName>
        <fullName evidence="1">4-hydroxy-tetrahydrodipicolinate reductase</fullName>
        <shortName evidence="1">HTPA reductase</shortName>
        <ecNumber evidence="1">1.17.1.8</ecNumber>
    </recommendedName>
</protein>
<evidence type="ECO:0000255" key="1">
    <source>
        <dbReference type="HAMAP-Rule" id="MF_00102"/>
    </source>
</evidence>
<evidence type="ECO:0000305" key="2"/>
<reference key="1">
    <citation type="journal article" date="2009" name="Stand. Genomic Sci.">
        <title>Complete genome sequence of Beutenbergia cavernae type strain (HKI 0122).</title>
        <authorList>
            <person name="Land M."/>
            <person name="Pukall R."/>
            <person name="Abt B."/>
            <person name="Goker M."/>
            <person name="Rohde M."/>
            <person name="Glavina Del Rio T."/>
            <person name="Tice H."/>
            <person name="Copeland A."/>
            <person name="Cheng J.F."/>
            <person name="Lucas S."/>
            <person name="Chen F."/>
            <person name="Nolan M."/>
            <person name="Bruce D."/>
            <person name="Goodwin L."/>
            <person name="Pitluck S."/>
            <person name="Ivanova N."/>
            <person name="Mavromatis K."/>
            <person name="Ovchinnikova G."/>
            <person name="Pati A."/>
            <person name="Chen A."/>
            <person name="Palaniappan K."/>
            <person name="Hauser L."/>
            <person name="Chang Y.J."/>
            <person name="Jefferies C.C."/>
            <person name="Saunders E."/>
            <person name="Brettin T."/>
            <person name="Detter J.C."/>
            <person name="Han C."/>
            <person name="Chain P."/>
            <person name="Bristow J."/>
            <person name="Eisen J.A."/>
            <person name="Markowitz V."/>
            <person name="Hugenholtz P."/>
            <person name="Kyrpides N.C."/>
            <person name="Klenk H.P."/>
            <person name="Lapidus A."/>
        </authorList>
    </citation>
    <scope>NUCLEOTIDE SEQUENCE [LARGE SCALE GENOMIC DNA]</scope>
    <source>
        <strain>ATCC BAA-8 / DSM 12333 / CCUG 43141 / JCM 11478 / NBRC 16432 / NCIMB 13614 / HKI 0122</strain>
    </source>
</reference>
<gene>
    <name evidence="1" type="primary">dapB</name>
    <name type="ordered locus">Bcav_2472</name>
</gene>
<dbReference type="EC" id="1.17.1.8" evidence="1"/>
<dbReference type="EMBL" id="CP001618">
    <property type="protein sequence ID" value="ACQ80722.1"/>
    <property type="molecule type" value="Genomic_DNA"/>
</dbReference>
<dbReference type="RefSeq" id="WP_015882962.1">
    <property type="nucleotide sequence ID" value="NC_012669.1"/>
</dbReference>
<dbReference type="SMR" id="C5BWQ6"/>
<dbReference type="STRING" id="471853.Bcav_2472"/>
<dbReference type="KEGG" id="bcv:Bcav_2472"/>
<dbReference type="eggNOG" id="COG0289">
    <property type="taxonomic scope" value="Bacteria"/>
</dbReference>
<dbReference type="HOGENOM" id="CLU_047479_0_1_11"/>
<dbReference type="OrthoDB" id="9790352at2"/>
<dbReference type="UniPathway" id="UPA00034">
    <property type="reaction ID" value="UER00018"/>
</dbReference>
<dbReference type="Proteomes" id="UP000007962">
    <property type="component" value="Chromosome"/>
</dbReference>
<dbReference type="GO" id="GO:0005829">
    <property type="term" value="C:cytosol"/>
    <property type="evidence" value="ECO:0007669"/>
    <property type="project" value="TreeGrafter"/>
</dbReference>
<dbReference type="GO" id="GO:0008839">
    <property type="term" value="F:4-hydroxy-tetrahydrodipicolinate reductase"/>
    <property type="evidence" value="ECO:0007669"/>
    <property type="project" value="UniProtKB-EC"/>
</dbReference>
<dbReference type="GO" id="GO:0051287">
    <property type="term" value="F:NAD binding"/>
    <property type="evidence" value="ECO:0007669"/>
    <property type="project" value="UniProtKB-UniRule"/>
</dbReference>
<dbReference type="GO" id="GO:0050661">
    <property type="term" value="F:NADP binding"/>
    <property type="evidence" value="ECO:0007669"/>
    <property type="project" value="UniProtKB-UniRule"/>
</dbReference>
<dbReference type="GO" id="GO:0016726">
    <property type="term" value="F:oxidoreductase activity, acting on CH or CH2 groups, NAD or NADP as acceptor"/>
    <property type="evidence" value="ECO:0007669"/>
    <property type="project" value="UniProtKB-UniRule"/>
</dbReference>
<dbReference type="GO" id="GO:0019877">
    <property type="term" value="P:diaminopimelate biosynthetic process"/>
    <property type="evidence" value="ECO:0007669"/>
    <property type="project" value="UniProtKB-UniRule"/>
</dbReference>
<dbReference type="GO" id="GO:0009089">
    <property type="term" value="P:lysine biosynthetic process via diaminopimelate"/>
    <property type="evidence" value="ECO:0007669"/>
    <property type="project" value="UniProtKB-UniRule"/>
</dbReference>
<dbReference type="CDD" id="cd02274">
    <property type="entry name" value="DHDPR_N"/>
    <property type="match status" value="1"/>
</dbReference>
<dbReference type="FunFam" id="3.30.360.10:FF:000009">
    <property type="entry name" value="4-hydroxy-tetrahydrodipicolinate reductase"/>
    <property type="match status" value="1"/>
</dbReference>
<dbReference type="Gene3D" id="3.30.360.10">
    <property type="entry name" value="Dihydrodipicolinate Reductase, domain 2"/>
    <property type="match status" value="1"/>
</dbReference>
<dbReference type="Gene3D" id="3.40.50.720">
    <property type="entry name" value="NAD(P)-binding Rossmann-like Domain"/>
    <property type="match status" value="1"/>
</dbReference>
<dbReference type="HAMAP" id="MF_00102">
    <property type="entry name" value="DapB"/>
    <property type="match status" value="1"/>
</dbReference>
<dbReference type="InterPro" id="IPR022663">
    <property type="entry name" value="DapB_C"/>
</dbReference>
<dbReference type="InterPro" id="IPR000846">
    <property type="entry name" value="DapB_N"/>
</dbReference>
<dbReference type="InterPro" id="IPR022664">
    <property type="entry name" value="DapB_N_CS"/>
</dbReference>
<dbReference type="InterPro" id="IPR023940">
    <property type="entry name" value="DHDPR_bac"/>
</dbReference>
<dbReference type="InterPro" id="IPR036291">
    <property type="entry name" value="NAD(P)-bd_dom_sf"/>
</dbReference>
<dbReference type="NCBIfam" id="TIGR00036">
    <property type="entry name" value="dapB"/>
    <property type="match status" value="1"/>
</dbReference>
<dbReference type="PANTHER" id="PTHR20836:SF0">
    <property type="entry name" value="4-HYDROXY-TETRAHYDRODIPICOLINATE REDUCTASE 1, CHLOROPLASTIC-RELATED"/>
    <property type="match status" value="1"/>
</dbReference>
<dbReference type="PANTHER" id="PTHR20836">
    <property type="entry name" value="DIHYDRODIPICOLINATE REDUCTASE"/>
    <property type="match status" value="1"/>
</dbReference>
<dbReference type="Pfam" id="PF05173">
    <property type="entry name" value="DapB_C"/>
    <property type="match status" value="1"/>
</dbReference>
<dbReference type="Pfam" id="PF01113">
    <property type="entry name" value="DapB_N"/>
    <property type="match status" value="1"/>
</dbReference>
<dbReference type="PIRSF" id="PIRSF000161">
    <property type="entry name" value="DHPR"/>
    <property type="match status" value="1"/>
</dbReference>
<dbReference type="SUPFAM" id="SSF55347">
    <property type="entry name" value="Glyceraldehyde-3-phosphate dehydrogenase-like, C-terminal domain"/>
    <property type="match status" value="1"/>
</dbReference>
<dbReference type="SUPFAM" id="SSF51735">
    <property type="entry name" value="NAD(P)-binding Rossmann-fold domains"/>
    <property type="match status" value="1"/>
</dbReference>
<dbReference type="PROSITE" id="PS01298">
    <property type="entry name" value="DAPB"/>
    <property type="match status" value="1"/>
</dbReference>